<protein>
    <recommendedName>
        <fullName evidence="1">2-dehydro-3-deoxyphosphooctonate aldolase</fullName>
        <ecNumber evidence="1">2.5.1.55</ecNumber>
    </recommendedName>
    <alternativeName>
        <fullName evidence="1">3-deoxy-D-manno-octulosonic acid 8-phosphate synthase</fullName>
    </alternativeName>
    <alternativeName>
        <fullName evidence="1">KDO-8-phosphate synthase</fullName>
        <shortName evidence="1">KDO 8-P synthase</shortName>
        <shortName evidence="1">KDOPS</shortName>
    </alternativeName>
    <alternativeName>
        <fullName evidence="1">Phospho-2-dehydro-3-deoxyoctonate aldolase</fullName>
    </alternativeName>
</protein>
<proteinExistence type="inferred from homology"/>
<name>KDSA_ENT38</name>
<organism>
    <name type="scientific">Enterobacter sp. (strain 638)</name>
    <dbReference type="NCBI Taxonomy" id="399742"/>
    <lineage>
        <taxon>Bacteria</taxon>
        <taxon>Pseudomonadati</taxon>
        <taxon>Pseudomonadota</taxon>
        <taxon>Gammaproteobacteria</taxon>
        <taxon>Enterobacterales</taxon>
        <taxon>Enterobacteriaceae</taxon>
        <taxon>Enterobacter</taxon>
    </lineage>
</organism>
<sequence>MKQKVVSIGDINVANDLPFVLFGGMNVLESRDLAMRICEHYVTVTQKLGIPYVFKASFDKANRSSINSYRGPGLEEGMKIFQELKQTFGVKVITDVHEASQAQPVAEVVDVIQLPAFLARQTDLVEAMAKTGAVINVKKPQFVSPGQMGNIVDKFIEGGNDQIILCDRGANFGYDNLVVDMLGFSVMKKVSNNSPVIFDVTHALQCRDPFGAASSGRRGQVTELARAGMATGIAGLFIEAHPDPANAKCDGPSALPLDKLEPFLKQIKAIDDLVKSFDELDTSN</sequence>
<comment type="catalytic activity">
    <reaction evidence="1">
        <text>D-arabinose 5-phosphate + phosphoenolpyruvate + H2O = 3-deoxy-alpha-D-manno-2-octulosonate-8-phosphate + phosphate</text>
        <dbReference type="Rhea" id="RHEA:14053"/>
        <dbReference type="ChEBI" id="CHEBI:15377"/>
        <dbReference type="ChEBI" id="CHEBI:43474"/>
        <dbReference type="ChEBI" id="CHEBI:57693"/>
        <dbReference type="ChEBI" id="CHEBI:58702"/>
        <dbReference type="ChEBI" id="CHEBI:85985"/>
        <dbReference type="EC" id="2.5.1.55"/>
    </reaction>
</comment>
<comment type="pathway">
    <text evidence="1">Carbohydrate biosynthesis; 3-deoxy-D-manno-octulosonate biosynthesis; 3-deoxy-D-manno-octulosonate from D-ribulose 5-phosphate: step 2/3.</text>
</comment>
<comment type="pathway">
    <text evidence="1">Bacterial outer membrane biogenesis; lipopolysaccharide biosynthesis.</text>
</comment>
<comment type="subcellular location">
    <subcellularLocation>
        <location evidence="1">Cytoplasm</location>
    </subcellularLocation>
</comment>
<comment type="similarity">
    <text evidence="1">Belongs to the KdsA family.</text>
</comment>
<accession>A4WBC2</accession>
<gene>
    <name evidence="1" type="primary">kdsA</name>
    <name type="ordered locus">Ent638_2333</name>
</gene>
<dbReference type="EC" id="2.5.1.55" evidence="1"/>
<dbReference type="EMBL" id="CP000653">
    <property type="protein sequence ID" value="ABP61002.1"/>
    <property type="molecule type" value="Genomic_DNA"/>
</dbReference>
<dbReference type="RefSeq" id="WP_012017716.1">
    <property type="nucleotide sequence ID" value="NC_009436.1"/>
</dbReference>
<dbReference type="SMR" id="A4WBC2"/>
<dbReference type="STRING" id="399742.Ent638_2333"/>
<dbReference type="GeneID" id="93309488"/>
<dbReference type="KEGG" id="ent:Ent638_2333"/>
<dbReference type="eggNOG" id="COG2877">
    <property type="taxonomic scope" value="Bacteria"/>
</dbReference>
<dbReference type="HOGENOM" id="CLU_036666_0_0_6"/>
<dbReference type="OrthoDB" id="9776934at2"/>
<dbReference type="UniPathway" id="UPA00030"/>
<dbReference type="UniPathway" id="UPA00357">
    <property type="reaction ID" value="UER00474"/>
</dbReference>
<dbReference type="Proteomes" id="UP000000230">
    <property type="component" value="Chromosome"/>
</dbReference>
<dbReference type="GO" id="GO:0005737">
    <property type="term" value="C:cytoplasm"/>
    <property type="evidence" value="ECO:0007669"/>
    <property type="project" value="UniProtKB-SubCell"/>
</dbReference>
<dbReference type="GO" id="GO:0008676">
    <property type="term" value="F:3-deoxy-8-phosphooctulonate synthase activity"/>
    <property type="evidence" value="ECO:0007669"/>
    <property type="project" value="UniProtKB-UniRule"/>
</dbReference>
<dbReference type="GO" id="GO:0019294">
    <property type="term" value="P:keto-3-deoxy-D-manno-octulosonic acid biosynthetic process"/>
    <property type="evidence" value="ECO:0007669"/>
    <property type="project" value="UniProtKB-UniRule"/>
</dbReference>
<dbReference type="FunFam" id="3.20.20.70:FF:000058">
    <property type="entry name" value="2-dehydro-3-deoxyphosphooctonate aldolase"/>
    <property type="match status" value="1"/>
</dbReference>
<dbReference type="Gene3D" id="3.20.20.70">
    <property type="entry name" value="Aldolase class I"/>
    <property type="match status" value="1"/>
</dbReference>
<dbReference type="HAMAP" id="MF_00056">
    <property type="entry name" value="KDO8P_synth"/>
    <property type="match status" value="1"/>
</dbReference>
<dbReference type="InterPro" id="IPR013785">
    <property type="entry name" value="Aldolase_TIM"/>
</dbReference>
<dbReference type="InterPro" id="IPR006218">
    <property type="entry name" value="DAHP1/KDSA"/>
</dbReference>
<dbReference type="InterPro" id="IPR006269">
    <property type="entry name" value="KDO8P_synthase"/>
</dbReference>
<dbReference type="NCBIfam" id="TIGR01362">
    <property type="entry name" value="KDO8P_synth"/>
    <property type="match status" value="1"/>
</dbReference>
<dbReference type="NCBIfam" id="NF003543">
    <property type="entry name" value="PRK05198.1"/>
    <property type="match status" value="1"/>
</dbReference>
<dbReference type="NCBIfam" id="NF009109">
    <property type="entry name" value="PRK12457.1"/>
    <property type="match status" value="1"/>
</dbReference>
<dbReference type="PANTHER" id="PTHR21057">
    <property type="entry name" value="PHOSPHO-2-DEHYDRO-3-DEOXYHEPTONATE ALDOLASE"/>
    <property type="match status" value="1"/>
</dbReference>
<dbReference type="Pfam" id="PF00793">
    <property type="entry name" value="DAHP_synth_1"/>
    <property type="match status" value="1"/>
</dbReference>
<dbReference type="SUPFAM" id="SSF51569">
    <property type="entry name" value="Aldolase"/>
    <property type="match status" value="1"/>
</dbReference>
<evidence type="ECO:0000255" key="1">
    <source>
        <dbReference type="HAMAP-Rule" id="MF_00056"/>
    </source>
</evidence>
<feature type="chain" id="PRO_1000057395" description="2-dehydro-3-deoxyphosphooctonate aldolase">
    <location>
        <begin position="1"/>
        <end position="284"/>
    </location>
</feature>
<reference key="1">
    <citation type="journal article" date="2010" name="PLoS Genet.">
        <title>Genome sequence of the plant growth promoting endophytic bacterium Enterobacter sp. 638.</title>
        <authorList>
            <person name="Taghavi S."/>
            <person name="van der Lelie D."/>
            <person name="Hoffman A."/>
            <person name="Zhang Y.B."/>
            <person name="Walla M.D."/>
            <person name="Vangronsveld J."/>
            <person name="Newman L."/>
            <person name="Monchy S."/>
        </authorList>
    </citation>
    <scope>NUCLEOTIDE SEQUENCE [LARGE SCALE GENOMIC DNA]</scope>
    <source>
        <strain>638</strain>
    </source>
</reference>
<keyword id="KW-0963">Cytoplasm</keyword>
<keyword id="KW-0448">Lipopolysaccharide biosynthesis</keyword>
<keyword id="KW-0808">Transferase</keyword>